<organism>
    <name type="scientific">Lactobacillus gasseri (strain ATCC 33323 / DSM 20243 / BCRC 14619 / CIP 102991 / JCM 1131 / KCTC 3163 / NCIMB 11718 / NCTC 13722 / AM63)</name>
    <dbReference type="NCBI Taxonomy" id="324831"/>
    <lineage>
        <taxon>Bacteria</taxon>
        <taxon>Bacillati</taxon>
        <taxon>Bacillota</taxon>
        <taxon>Bacilli</taxon>
        <taxon>Lactobacillales</taxon>
        <taxon>Lactobacillaceae</taxon>
        <taxon>Lactobacillus</taxon>
    </lineage>
</organism>
<comment type="function">
    <text evidence="1">Catalyzes the reductive methylation of 2'-deoxyuridine-5'-monophosphate (dUMP) to 2'-deoxythymidine-5'-monophosphate (dTMP) while utilizing 5,10-methylenetetrahydrofolate (mTHF) as the methyl donor and reductant in the reaction, yielding dihydrofolate (DHF) as a by-product. This enzymatic reaction provides an intracellular de novo source of dTMP, an essential precursor for DNA biosynthesis.</text>
</comment>
<comment type="catalytic activity">
    <reaction evidence="1">
        <text>dUMP + (6R)-5,10-methylene-5,6,7,8-tetrahydrofolate = 7,8-dihydrofolate + dTMP</text>
        <dbReference type="Rhea" id="RHEA:12104"/>
        <dbReference type="ChEBI" id="CHEBI:15636"/>
        <dbReference type="ChEBI" id="CHEBI:57451"/>
        <dbReference type="ChEBI" id="CHEBI:63528"/>
        <dbReference type="ChEBI" id="CHEBI:246422"/>
        <dbReference type="EC" id="2.1.1.45"/>
    </reaction>
</comment>
<comment type="pathway">
    <text evidence="1">Pyrimidine metabolism; dTTP biosynthesis.</text>
</comment>
<comment type="subunit">
    <text evidence="1">Homodimer.</text>
</comment>
<comment type="subcellular location">
    <subcellularLocation>
        <location evidence="1">Cytoplasm</location>
    </subcellularLocation>
</comment>
<comment type="similarity">
    <text evidence="1">Belongs to the thymidylate synthase family. Bacterial-type ThyA subfamily.</text>
</comment>
<reference key="1">
    <citation type="journal article" date="2006" name="Proc. Natl. Acad. Sci. U.S.A.">
        <title>Comparative genomics of the lactic acid bacteria.</title>
        <authorList>
            <person name="Makarova K.S."/>
            <person name="Slesarev A."/>
            <person name="Wolf Y.I."/>
            <person name="Sorokin A."/>
            <person name="Mirkin B."/>
            <person name="Koonin E.V."/>
            <person name="Pavlov A."/>
            <person name="Pavlova N."/>
            <person name="Karamychev V."/>
            <person name="Polouchine N."/>
            <person name="Shakhova V."/>
            <person name="Grigoriev I."/>
            <person name="Lou Y."/>
            <person name="Rohksar D."/>
            <person name="Lucas S."/>
            <person name="Huang K."/>
            <person name="Goodstein D.M."/>
            <person name="Hawkins T."/>
            <person name="Plengvidhya V."/>
            <person name="Welker D."/>
            <person name="Hughes J."/>
            <person name="Goh Y."/>
            <person name="Benson A."/>
            <person name="Baldwin K."/>
            <person name="Lee J.-H."/>
            <person name="Diaz-Muniz I."/>
            <person name="Dosti B."/>
            <person name="Smeianov V."/>
            <person name="Wechter W."/>
            <person name="Barabote R."/>
            <person name="Lorca G."/>
            <person name="Altermann E."/>
            <person name="Barrangou R."/>
            <person name="Ganesan B."/>
            <person name="Xie Y."/>
            <person name="Rawsthorne H."/>
            <person name="Tamir D."/>
            <person name="Parker C."/>
            <person name="Breidt F."/>
            <person name="Broadbent J.R."/>
            <person name="Hutkins R."/>
            <person name="O'Sullivan D."/>
            <person name="Steele J."/>
            <person name="Unlu G."/>
            <person name="Saier M.H. Jr."/>
            <person name="Klaenhammer T."/>
            <person name="Richardson P."/>
            <person name="Kozyavkin S."/>
            <person name="Weimer B.C."/>
            <person name="Mills D.A."/>
        </authorList>
    </citation>
    <scope>NUCLEOTIDE SEQUENCE [LARGE SCALE GENOMIC DNA]</scope>
    <source>
        <strain>ATCC 33323 / DSM 20243 / BCRC 14619 / CIP 102991 / JCM 1131 / KCTC 3163 / NCIMB 11718 / NCTC 13722 / AM63</strain>
    </source>
</reference>
<sequence length="318" mass="37111">MATLEQPYLDLLNKIMIEGHDKEDRTGTGTRSIFGAQMRFNLSEGFPILTTKRVPFGLIKSELLWFLRGDTNIRFLLEHNNHIWDEWAFKNWVESDEYHGPDMTNFGLRSQEDAKFKQVYQEEMKKFDERILADRDFAVKFGNLGDVYGAQWRHWQKREGGFIDQIQNVIDQIKKTPYSRRLIVSAWNPEDVPNSALPPCHVLFQFYVNDGRLSVQLYQRSGDMFLGVPFNIASYSLLVNLIAQETGLKPGEFIHTLGDAHIYRNHFDQVKELLTRKPYDSPKLWLNPDKKKIEDFEMSDIKLVDYKHHGTIKAPVAV</sequence>
<accession>Q044A1</accession>
<evidence type="ECO:0000255" key="1">
    <source>
        <dbReference type="HAMAP-Rule" id="MF_00008"/>
    </source>
</evidence>
<gene>
    <name evidence="1" type="primary">thyA</name>
    <name type="ordered locus">LGAS_0830</name>
</gene>
<name>TYSY_LACGA</name>
<keyword id="KW-0963">Cytoplasm</keyword>
<keyword id="KW-0489">Methyltransferase</keyword>
<keyword id="KW-0545">Nucleotide biosynthesis</keyword>
<keyword id="KW-0808">Transferase</keyword>
<dbReference type="EC" id="2.1.1.45" evidence="1"/>
<dbReference type="EMBL" id="CP000413">
    <property type="protein sequence ID" value="ABJ60221.1"/>
    <property type="molecule type" value="Genomic_DNA"/>
</dbReference>
<dbReference type="RefSeq" id="WP_003647464.1">
    <property type="nucleotide sequence ID" value="NZ_WBMG01000005.1"/>
</dbReference>
<dbReference type="SMR" id="Q044A1"/>
<dbReference type="GeneID" id="29638342"/>
<dbReference type="KEGG" id="lga:LGAS_0830"/>
<dbReference type="HOGENOM" id="CLU_021669_0_0_9"/>
<dbReference type="BioCyc" id="LGAS324831:G1G6Y-824-MONOMER"/>
<dbReference type="UniPathway" id="UPA00575"/>
<dbReference type="Proteomes" id="UP000000664">
    <property type="component" value="Chromosome"/>
</dbReference>
<dbReference type="GO" id="GO:0005829">
    <property type="term" value="C:cytosol"/>
    <property type="evidence" value="ECO:0007669"/>
    <property type="project" value="TreeGrafter"/>
</dbReference>
<dbReference type="GO" id="GO:0004799">
    <property type="term" value="F:thymidylate synthase activity"/>
    <property type="evidence" value="ECO:0007669"/>
    <property type="project" value="UniProtKB-UniRule"/>
</dbReference>
<dbReference type="GO" id="GO:0006231">
    <property type="term" value="P:dTMP biosynthetic process"/>
    <property type="evidence" value="ECO:0007669"/>
    <property type="project" value="UniProtKB-UniRule"/>
</dbReference>
<dbReference type="GO" id="GO:0006235">
    <property type="term" value="P:dTTP biosynthetic process"/>
    <property type="evidence" value="ECO:0007669"/>
    <property type="project" value="UniProtKB-UniRule"/>
</dbReference>
<dbReference type="GO" id="GO:0032259">
    <property type="term" value="P:methylation"/>
    <property type="evidence" value="ECO:0007669"/>
    <property type="project" value="UniProtKB-KW"/>
</dbReference>
<dbReference type="CDD" id="cd00351">
    <property type="entry name" value="TS_Pyrimidine_HMase"/>
    <property type="match status" value="1"/>
</dbReference>
<dbReference type="Gene3D" id="3.30.572.10">
    <property type="entry name" value="Thymidylate synthase/dCMP hydroxymethylase domain"/>
    <property type="match status" value="1"/>
</dbReference>
<dbReference type="HAMAP" id="MF_00008">
    <property type="entry name" value="Thymidy_synth_bact"/>
    <property type="match status" value="1"/>
</dbReference>
<dbReference type="InterPro" id="IPR045097">
    <property type="entry name" value="Thymidate_synth/dCMP_Mease"/>
</dbReference>
<dbReference type="InterPro" id="IPR023451">
    <property type="entry name" value="Thymidate_synth/dCMP_Mease_dom"/>
</dbReference>
<dbReference type="InterPro" id="IPR036926">
    <property type="entry name" value="Thymidate_synth/dCMP_Mease_sf"/>
</dbReference>
<dbReference type="InterPro" id="IPR000398">
    <property type="entry name" value="Thymidylate_synthase"/>
</dbReference>
<dbReference type="InterPro" id="IPR020940">
    <property type="entry name" value="Thymidylate_synthase_AS"/>
</dbReference>
<dbReference type="NCBIfam" id="NF002496">
    <property type="entry name" value="PRK01827.1-2"/>
    <property type="match status" value="1"/>
</dbReference>
<dbReference type="NCBIfam" id="TIGR03284">
    <property type="entry name" value="thym_sym"/>
    <property type="match status" value="1"/>
</dbReference>
<dbReference type="PANTHER" id="PTHR11548">
    <property type="entry name" value="THYMIDYLATE SYNTHASE 1"/>
    <property type="match status" value="1"/>
</dbReference>
<dbReference type="PANTHER" id="PTHR11548:SF1">
    <property type="entry name" value="THYMIDYLATE SYNTHASE 1"/>
    <property type="match status" value="1"/>
</dbReference>
<dbReference type="Pfam" id="PF00303">
    <property type="entry name" value="Thymidylat_synt"/>
    <property type="match status" value="1"/>
</dbReference>
<dbReference type="PRINTS" id="PR00108">
    <property type="entry name" value="THYMDSNTHASE"/>
</dbReference>
<dbReference type="SUPFAM" id="SSF55831">
    <property type="entry name" value="Thymidylate synthase/dCMP hydroxymethylase"/>
    <property type="match status" value="1"/>
</dbReference>
<dbReference type="PROSITE" id="PS00091">
    <property type="entry name" value="THYMIDYLATE_SYNTHASE"/>
    <property type="match status" value="1"/>
</dbReference>
<proteinExistence type="inferred from homology"/>
<protein>
    <recommendedName>
        <fullName evidence="1">Thymidylate synthase</fullName>
        <shortName evidence="1">TS</shortName>
        <shortName evidence="1">TSase</shortName>
        <ecNumber evidence="1">2.1.1.45</ecNumber>
    </recommendedName>
</protein>
<feature type="chain" id="PRO_1000000616" description="Thymidylate synthase">
    <location>
        <begin position="1"/>
        <end position="318"/>
    </location>
</feature>
<feature type="active site" description="Nucleophile" evidence="1">
    <location>
        <position position="200"/>
    </location>
</feature>
<feature type="binding site" description="in other chain" evidence="1">
    <location>
        <position position="25"/>
    </location>
    <ligand>
        <name>dUMP</name>
        <dbReference type="ChEBI" id="CHEBI:246422"/>
        <note>ligand shared between dimeric partners</note>
    </ligand>
</feature>
<feature type="binding site" evidence="1">
    <location>
        <begin position="180"/>
        <end position="181"/>
    </location>
    <ligand>
        <name>dUMP</name>
        <dbReference type="ChEBI" id="CHEBI:246422"/>
        <note>ligand shared between dimeric partners</note>
    </ligand>
</feature>
<feature type="binding site" description="in other chain" evidence="1">
    <location>
        <begin position="220"/>
        <end position="223"/>
    </location>
    <ligand>
        <name>dUMP</name>
        <dbReference type="ChEBI" id="CHEBI:246422"/>
        <note>ligand shared between dimeric partners</note>
    </ligand>
</feature>
<feature type="binding site" evidence="1">
    <location>
        <position position="223"/>
    </location>
    <ligand>
        <name>(6R)-5,10-methylene-5,6,7,8-tetrahydrofolate</name>
        <dbReference type="ChEBI" id="CHEBI:15636"/>
    </ligand>
</feature>
<feature type="binding site" description="in other chain" evidence="1">
    <location>
        <position position="231"/>
    </location>
    <ligand>
        <name>dUMP</name>
        <dbReference type="ChEBI" id="CHEBI:246422"/>
        <note>ligand shared between dimeric partners</note>
    </ligand>
</feature>
<feature type="binding site" description="in other chain" evidence="1">
    <location>
        <begin position="261"/>
        <end position="263"/>
    </location>
    <ligand>
        <name>dUMP</name>
        <dbReference type="ChEBI" id="CHEBI:246422"/>
        <note>ligand shared between dimeric partners</note>
    </ligand>
</feature>
<feature type="binding site" evidence="1">
    <location>
        <position position="317"/>
    </location>
    <ligand>
        <name>(6R)-5,10-methylene-5,6,7,8-tetrahydrofolate</name>
        <dbReference type="ChEBI" id="CHEBI:15636"/>
    </ligand>
</feature>